<feature type="chain" id="PRO_0000084451" description="Lethal(3)malignant brain tumor-like protein 3">
    <location>
        <begin position="1"/>
        <end position="883"/>
    </location>
</feature>
<feature type="repeat" description="MBT 1">
    <location>
        <begin position="232"/>
        <end position="332"/>
    </location>
</feature>
<feature type="repeat" description="MBT 2">
    <location>
        <begin position="340"/>
        <end position="439"/>
    </location>
</feature>
<feature type="repeat" description="MBT 3">
    <location>
        <begin position="448"/>
        <end position="543"/>
    </location>
</feature>
<feature type="domain" description="SAM" evidence="2">
    <location>
        <begin position="811"/>
        <end position="875"/>
    </location>
</feature>
<feature type="zinc finger region" description="CCHHC-type; degenerate" evidence="3">
    <location>
        <begin position="549"/>
        <end position="593"/>
    </location>
</feature>
<feature type="region of interest" description="Interaction with RBPJ. Required for transcription repressor activity on Notch target genes" evidence="1">
    <location>
        <begin position="1"/>
        <end position="64"/>
    </location>
</feature>
<feature type="region of interest" description="Disordered" evidence="4">
    <location>
        <begin position="146"/>
        <end position="223"/>
    </location>
</feature>
<feature type="region of interest" description="Disordered" evidence="4">
    <location>
        <begin position="595"/>
        <end position="768"/>
    </location>
</feature>
<feature type="compositionally biased region" description="Basic and acidic residues" evidence="4">
    <location>
        <begin position="146"/>
        <end position="156"/>
    </location>
</feature>
<feature type="compositionally biased region" description="Acidic residues" evidence="4">
    <location>
        <begin position="157"/>
        <end position="166"/>
    </location>
</feature>
<feature type="compositionally biased region" description="Acidic residues" evidence="4">
    <location>
        <begin position="185"/>
        <end position="194"/>
    </location>
</feature>
<feature type="compositionally biased region" description="Basic and acidic residues" evidence="4">
    <location>
        <begin position="616"/>
        <end position="662"/>
    </location>
</feature>
<feature type="compositionally biased region" description="Low complexity" evidence="4">
    <location>
        <begin position="663"/>
        <end position="742"/>
    </location>
</feature>
<feature type="compositionally biased region" description="Low complexity" evidence="4">
    <location>
        <begin position="749"/>
        <end position="768"/>
    </location>
</feature>
<feature type="cross-link" description="Glycyl lysine isopeptide (Lys-Gly) (interchain with G-Cter in SUMO2)" evidence="1">
    <location>
        <position position="638"/>
    </location>
</feature>
<feature type="splice variant" id="VSP_013509" description="In isoform 2." evidence="9">
    <location>
        <begin position="72"/>
        <end position="96"/>
    </location>
</feature>
<feature type="splice variant" id="VSP_013510" description="In isoform 3." evidence="10">
    <original>CGYRIKLHFDGYS</original>
    <variation>SSALYLFGKRDDG</variation>
    <location>
        <begin position="290"/>
        <end position="302"/>
    </location>
</feature>
<feature type="splice variant" id="VSP_013511" description="In isoform 3." evidence="10">
    <location>
        <begin position="303"/>
        <end position="883"/>
    </location>
</feature>
<feature type="sequence conflict" description="In Ref. 3; BAC98253." evidence="11" ref="3">
    <original>H</original>
    <variation>Y</variation>
    <location>
        <position position="146"/>
    </location>
</feature>
<feature type="sequence conflict" description="In Ref. 1; BAC27386." evidence="11" ref="1">
    <original>P</original>
    <variation>H</variation>
    <location>
        <position position="275"/>
    </location>
</feature>
<dbReference type="EMBL" id="AK031398">
    <property type="protein sequence ID" value="BAC27386.1"/>
    <property type="molecule type" value="mRNA"/>
</dbReference>
<dbReference type="EMBL" id="AK045667">
    <property type="protein sequence ID" value="BAC32449.1"/>
    <property type="molecule type" value="mRNA"/>
</dbReference>
<dbReference type="EMBL" id="BC082309">
    <property type="protein sequence ID" value="AAH82309.1"/>
    <property type="molecule type" value="mRNA"/>
</dbReference>
<dbReference type="EMBL" id="BC085192">
    <property type="protein sequence ID" value="AAH85192.1"/>
    <property type="molecule type" value="mRNA"/>
</dbReference>
<dbReference type="EMBL" id="AK129443">
    <property type="protein sequence ID" value="BAC98253.1"/>
    <property type="molecule type" value="mRNA"/>
</dbReference>
<dbReference type="CCDS" id="CCDS23756.1">
    <molecule id="Q8BLB7-1"/>
</dbReference>
<dbReference type="CCDS" id="CCDS83689.1">
    <molecule id="Q8BLB7-2"/>
</dbReference>
<dbReference type="RefSeq" id="NP_001334396.1">
    <molecule id="Q8BLB7-2"/>
    <property type="nucleotide sequence ID" value="NM_001347467.3"/>
</dbReference>
<dbReference type="RefSeq" id="NP_001346183.1">
    <molecule id="Q8BLB7-1"/>
    <property type="nucleotide sequence ID" value="NM_001359254.2"/>
</dbReference>
<dbReference type="RefSeq" id="NP_001395186.1">
    <molecule id="Q8BLB7-1"/>
    <property type="nucleotide sequence ID" value="NM_001408257.1"/>
</dbReference>
<dbReference type="RefSeq" id="NP_001395187.1">
    <molecule id="Q8BLB7-2"/>
    <property type="nucleotide sequence ID" value="NM_001408258.1"/>
</dbReference>
<dbReference type="RefSeq" id="NP_766375.1">
    <molecule id="Q8BLB7-1"/>
    <property type="nucleotide sequence ID" value="NM_172787.4"/>
</dbReference>
<dbReference type="RefSeq" id="XP_006512794.1">
    <property type="nucleotide sequence ID" value="XM_006512731.3"/>
</dbReference>
<dbReference type="RefSeq" id="XP_006512795.1">
    <property type="nucleotide sequence ID" value="XM_006512732.3"/>
</dbReference>
<dbReference type="RefSeq" id="XP_006512796.1">
    <molecule id="Q8BLB7-1"/>
    <property type="nucleotide sequence ID" value="XM_006512733.4"/>
</dbReference>
<dbReference type="RefSeq" id="XP_006512798.1">
    <property type="nucleotide sequence ID" value="XM_006512735.3"/>
</dbReference>
<dbReference type="RefSeq" id="XP_030100941.1">
    <molecule id="Q8BLB7-2"/>
    <property type="nucleotide sequence ID" value="XM_030245081.2"/>
</dbReference>
<dbReference type="RefSeq" id="XP_036011665.1">
    <molecule id="Q8BLB7-2"/>
    <property type="nucleotide sequence ID" value="XM_036155772.1"/>
</dbReference>
<dbReference type="SMR" id="Q8BLB7"/>
<dbReference type="BioGRID" id="231865">
    <property type="interactions" value="8"/>
</dbReference>
<dbReference type="FunCoup" id="Q8BLB7">
    <property type="interactions" value="3359"/>
</dbReference>
<dbReference type="STRING" id="10090.ENSMUSP00000037619"/>
<dbReference type="GlyGen" id="Q8BLB7">
    <property type="glycosylation" value="2 sites"/>
</dbReference>
<dbReference type="iPTMnet" id="Q8BLB7"/>
<dbReference type="PhosphoSitePlus" id="Q8BLB7"/>
<dbReference type="jPOST" id="Q8BLB7"/>
<dbReference type="PaxDb" id="10090-ENSMUSP00000037619"/>
<dbReference type="PeptideAtlas" id="Q8BLB7"/>
<dbReference type="ProteomicsDB" id="286214">
    <molecule id="Q8BLB7-1"/>
</dbReference>
<dbReference type="ProteomicsDB" id="286215">
    <molecule id="Q8BLB7-2"/>
</dbReference>
<dbReference type="ProteomicsDB" id="286216">
    <molecule id="Q8BLB7-3"/>
</dbReference>
<dbReference type="Pumba" id="Q8BLB7"/>
<dbReference type="Antibodypedia" id="32840">
    <property type="antibodies" value="173 antibodies from 27 providers"/>
</dbReference>
<dbReference type="DNASU" id="237339"/>
<dbReference type="Ensembl" id="ENSMUST00000040219.13">
    <molecule id="Q8BLB7-1"/>
    <property type="protein sequence ID" value="ENSMUSP00000037619.7"/>
    <property type="gene ID" value="ENSMUSG00000039089.16"/>
</dbReference>
<dbReference type="Ensembl" id="ENSMUST00000105519.10">
    <molecule id="Q8BLB7-2"/>
    <property type="protein sequence ID" value="ENSMUSP00000101158.4"/>
    <property type="gene ID" value="ENSMUSG00000039089.16"/>
</dbReference>
<dbReference type="Ensembl" id="ENSMUST00000174766.2">
    <molecule id="Q8BLB7-1"/>
    <property type="protein sequence ID" value="ENSMUSP00000133479.2"/>
    <property type="gene ID" value="ENSMUSG00000039089.16"/>
</dbReference>
<dbReference type="GeneID" id="237339"/>
<dbReference type="KEGG" id="mmu:237339"/>
<dbReference type="UCSC" id="uc007esa.1">
    <molecule id="Q8BLB7-2"/>
    <property type="organism name" value="mouse"/>
</dbReference>
<dbReference type="UCSC" id="uc007esb.1">
    <molecule id="Q8BLB7-1"/>
    <property type="organism name" value="mouse"/>
</dbReference>
<dbReference type="UCSC" id="uc007esd.1">
    <molecule id="Q8BLB7-3"/>
    <property type="organism name" value="mouse"/>
</dbReference>
<dbReference type="AGR" id="MGI:2143628"/>
<dbReference type="CTD" id="84456"/>
<dbReference type="MGI" id="MGI:2143628">
    <property type="gene designation" value="L3mbtl3"/>
</dbReference>
<dbReference type="VEuPathDB" id="HostDB:ENSMUSG00000039089"/>
<dbReference type="eggNOG" id="KOG3766">
    <property type="taxonomic scope" value="Eukaryota"/>
</dbReference>
<dbReference type="GeneTree" id="ENSGT00940000159800"/>
<dbReference type="HOGENOM" id="CLU_004064_0_1_1"/>
<dbReference type="InParanoid" id="Q8BLB7"/>
<dbReference type="OMA" id="QFCENCY"/>
<dbReference type="OrthoDB" id="8188861at2759"/>
<dbReference type="PhylomeDB" id="Q8BLB7"/>
<dbReference type="TreeFam" id="TF316498"/>
<dbReference type="BioGRID-ORCS" id="237339">
    <property type="hits" value="4 hits in 82 CRISPR screens"/>
</dbReference>
<dbReference type="ChiTaRS" id="L3mbtl3">
    <property type="organism name" value="mouse"/>
</dbReference>
<dbReference type="PRO" id="PR:Q8BLB7"/>
<dbReference type="Proteomes" id="UP000000589">
    <property type="component" value="Chromosome 10"/>
</dbReference>
<dbReference type="RNAct" id="Q8BLB7">
    <property type="molecule type" value="protein"/>
</dbReference>
<dbReference type="Bgee" id="ENSMUSG00000039089">
    <property type="expression patterns" value="Expressed in manus and 229 other cell types or tissues"/>
</dbReference>
<dbReference type="GO" id="GO:0005730">
    <property type="term" value="C:nucleolus"/>
    <property type="evidence" value="ECO:0007669"/>
    <property type="project" value="Ensembl"/>
</dbReference>
<dbReference type="GO" id="GO:0005654">
    <property type="term" value="C:nucleoplasm"/>
    <property type="evidence" value="ECO:0007669"/>
    <property type="project" value="Ensembl"/>
</dbReference>
<dbReference type="GO" id="GO:0005634">
    <property type="term" value="C:nucleus"/>
    <property type="evidence" value="ECO:0000314"/>
    <property type="project" value="MGI"/>
</dbReference>
<dbReference type="GO" id="GO:0003682">
    <property type="term" value="F:chromatin binding"/>
    <property type="evidence" value="ECO:0000250"/>
    <property type="project" value="UniProtKB"/>
</dbReference>
<dbReference type="GO" id="GO:0042802">
    <property type="term" value="F:identical protein binding"/>
    <property type="evidence" value="ECO:0007669"/>
    <property type="project" value="Ensembl"/>
</dbReference>
<dbReference type="GO" id="GO:0140034">
    <property type="term" value="F:methylation-dependent protein binding"/>
    <property type="evidence" value="ECO:0007669"/>
    <property type="project" value="Ensembl"/>
</dbReference>
<dbReference type="GO" id="GO:0008270">
    <property type="term" value="F:zinc ion binding"/>
    <property type="evidence" value="ECO:0007669"/>
    <property type="project" value="UniProtKB-KW"/>
</dbReference>
<dbReference type="GO" id="GO:0006325">
    <property type="term" value="P:chromatin organization"/>
    <property type="evidence" value="ECO:0007669"/>
    <property type="project" value="UniProtKB-KW"/>
</dbReference>
<dbReference type="GO" id="GO:0043249">
    <property type="term" value="P:erythrocyte maturation"/>
    <property type="evidence" value="ECO:0000314"/>
    <property type="project" value="MGI"/>
</dbReference>
<dbReference type="GO" id="GO:0030851">
    <property type="term" value="P:granulocyte differentiation"/>
    <property type="evidence" value="ECO:0000315"/>
    <property type="project" value="MGI"/>
</dbReference>
<dbReference type="GO" id="GO:0030225">
    <property type="term" value="P:macrophage differentiation"/>
    <property type="evidence" value="ECO:0000315"/>
    <property type="project" value="MGI"/>
</dbReference>
<dbReference type="GO" id="GO:0030099">
    <property type="term" value="P:myeloid cell differentiation"/>
    <property type="evidence" value="ECO:0000315"/>
    <property type="project" value="MGI"/>
</dbReference>
<dbReference type="GO" id="GO:0045892">
    <property type="term" value="P:negative regulation of DNA-templated transcription"/>
    <property type="evidence" value="ECO:0007669"/>
    <property type="project" value="Ensembl"/>
</dbReference>
<dbReference type="GO" id="GO:0160217">
    <property type="term" value="P:negative regulation of transcription initiation-coupled chromatin remodeling"/>
    <property type="evidence" value="ECO:0000250"/>
    <property type="project" value="UniProtKB"/>
</dbReference>
<dbReference type="GO" id="GO:2000060">
    <property type="term" value="P:positive regulation of ubiquitin-dependent protein catabolic process"/>
    <property type="evidence" value="ECO:0007669"/>
    <property type="project" value="Ensembl"/>
</dbReference>
<dbReference type="GO" id="GO:2000058">
    <property type="term" value="P:regulation of ubiquitin-dependent protein catabolic process"/>
    <property type="evidence" value="ECO:0000315"/>
    <property type="project" value="UniProtKB"/>
</dbReference>
<dbReference type="CDD" id="cd20132">
    <property type="entry name" value="MBT_L3MBTL3_rpt1"/>
    <property type="match status" value="1"/>
</dbReference>
<dbReference type="CDD" id="cd20135">
    <property type="entry name" value="MBT_L3MBTL3_rpt2"/>
    <property type="match status" value="1"/>
</dbReference>
<dbReference type="CDD" id="cd20138">
    <property type="entry name" value="MBT_L3MBTL3_rpt3"/>
    <property type="match status" value="1"/>
</dbReference>
<dbReference type="CDD" id="cd09582">
    <property type="entry name" value="SAM_Scm-like-3MBT3_4"/>
    <property type="match status" value="1"/>
</dbReference>
<dbReference type="FunFam" id="2.30.30.140:FF:000007">
    <property type="entry name" value="Lethal(3)malignant brain tumor-like protein 1"/>
    <property type="match status" value="2"/>
</dbReference>
<dbReference type="FunFam" id="1.10.150.50:FF:000035">
    <property type="entry name" value="lethal(3)malignant brain tumor-like protein 3 isoform X2"/>
    <property type="match status" value="1"/>
</dbReference>
<dbReference type="Gene3D" id="2.30.30.140">
    <property type="match status" value="3"/>
</dbReference>
<dbReference type="Gene3D" id="1.10.150.50">
    <property type="entry name" value="Transcription Factor, Ets-1"/>
    <property type="match status" value="1"/>
</dbReference>
<dbReference type="InterPro" id="IPR004092">
    <property type="entry name" value="Mbt"/>
</dbReference>
<dbReference type="InterPro" id="IPR050548">
    <property type="entry name" value="PcG_chromatin_remod_factors"/>
</dbReference>
<dbReference type="InterPro" id="IPR001660">
    <property type="entry name" value="SAM"/>
</dbReference>
<dbReference type="InterPro" id="IPR013761">
    <property type="entry name" value="SAM/pointed_sf"/>
</dbReference>
<dbReference type="InterPro" id="IPR002515">
    <property type="entry name" value="Znf_C2H2C"/>
</dbReference>
<dbReference type="PANTHER" id="PTHR12247:SF72">
    <property type="entry name" value="LETHAL(3)MALIGNANT BRAIN TUMOR-LIKE PROTEIN 3"/>
    <property type="match status" value="1"/>
</dbReference>
<dbReference type="PANTHER" id="PTHR12247">
    <property type="entry name" value="POLYCOMB GROUP PROTEIN"/>
    <property type="match status" value="1"/>
</dbReference>
<dbReference type="Pfam" id="PF02820">
    <property type="entry name" value="MBT"/>
    <property type="match status" value="3"/>
</dbReference>
<dbReference type="Pfam" id="PF00536">
    <property type="entry name" value="SAM_1"/>
    <property type="match status" value="1"/>
</dbReference>
<dbReference type="SMART" id="SM00561">
    <property type="entry name" value="MBT"/>
    <property type="match status" value="3"/>
</dbReference>
<dbReference type="SMART" id="SM00454">
    <property type="entry name" value="SAM"/>
    <property type="match status" value="1"/>
</dbReference>
<dbReference type="SUPFAM" id="SSF47769">
    <property type="entry name" value="SAM/Pointed domain"/>
    <property type="match status" value="1"/>
</dbReference>
<dbReference type="SUPFAM" id="SSF63748">
    <property type="entry name" value="Tudor/PWWP/MBT"/>
    <property type="match status" value="3"/>
</dbReference>
<dbReference type="PROSITE" id="PS51079">
    <property type="entry name" value="MBT"/>
    <property type="match status" value="3"/>
</dbReference>
<dbReference type="PROSITE" id="PS50105">
    <property type="entry name" value="SAM_DOMAIN"/>
    <property type="match status" value="1"/>
</dbReference>
<dbReference type="PROSITE" id="PS51802">
    <property type="entry name" value="ZF_CCHHC"/>
    <property type="match status" value="1"/>
</dbReference>
<reference key="1">
    <citation type="journal article" date="2005" name="Science">
        <title>The transcriptional landscape of the mammalian genome.</title>
        <authorList>
            <person name="Carninci P."/>
            <person name="Kasukawa T."/>
            <person name="Katayama S."/>
            <person name="Gough J."/>
            <person name="Frith M.C."/>
            <person name="Maeda N."/>
            <person name="Oyama R."/>
            <person name="Ravasi T."/>
            <person name="Lenhard B."/>
            <person name="Wells C."/>
            <person name="Kodzius R."/>
            <person name="Shimokawa K."/>
            <person name="Bajic V.B."/>
            <person name="Brenner S.E."/>
            <person name="Batalov S."/>
            <person name="Forrest A.R."/>
            <person name="Zavolan M."/>
            <person name="Davis M.J."/>
            <person name="Wilming L.G."/>
            <person name="Aidinis V."/>
            <person name="Allen J.E."/>
            <person name="Ambesi-Impiombato A."/>
            <person name="Apweiler R."/>
            <person name="Aturaliya R.N."/>
            <person name="Bailey T.L."/>
            <person name="Bansal M."/>
            <person name="Baxter L."/>
            <person name="Beisel K.W."/>
            <person name="Bersano T."/>
            <person name="Bono H."/>
            <person name="Chalk A.M."/>
            <person name="Chiu K.P."/>
            <person name="Choudhary V."/>
            <person name="Christoffels A."/>
            <person name="Clutterbuck D.R."/>
            <person name="Crowe M.L."/>
            <person name="Dalla E."/>
            <person name="Dalrymple B.P."/>
            <person name="de Bono B."/>
            <person name="Della Gatta G."/>
            <person name="di Bernardo D."/>
            <person name="Down T."/>
            <person name="Engstrom P."/>
            <person name="Fagiolini M."/>
            <person name="Faulkner G."/>
            <person name="Fletcher C.F."/>
            <person name="Fukushima T."/>
            <person name="Furuno M."/>
            <person name="Futaki S."/>
            <person name="Gariboldi M."/>
            <person name="Georgii-Hemming P."/>
            <person name="Gingeras T.R."/>
            <person name="Gojobori T."/>
            <person name="Green R.E."/>
            <person name="Gustincich S."/>
            <person name="Harbers M."/>
            <person name="Hayashi Y."/>
            <person name="Hensch T.K."/>
            <person name="Hirokawa N."/>
            <person name="Hill D."/>
            <person name="Huminiecki L."/>
            <person name="Iacono M."/>
            <person name="Ikeo K."/>
            <person name="Iwama A."/>
            <person name="Ishikawa T."/>
            <person name="Jakt M."/>
            <person name="Kanapin A."/>
            <person name="Katoh M."/>
            <person name="Kawasawa Y."/>
            <person name="Kelso J."/>
            <person name="Kitamura H."/>
            <person name="Kitano H."/>
            <person name="Kollias G."/>
            <person name="Krishnan S.P."/>
            <person name="Kruger A."/>
            <person name="Kummerfeld S.K."/>
            <person name="Kurochkin I.V."/>
            <person name="Lareau L.F."/>
            <person name="Lazarevic D."/>
            <person name="Lipovich L."/>
            <person name="Liu J."/>
            <person name="Liuni S."/>
            <person name="McWilliam S."/>
            <person name="Madan Babu M."/>
            <person name="Madera M."/>
            <person name="Marchionni L."/>
            <person name="Matsuda H."/>
            <person name="Matsuzawa S."/>
            <person name="Miki H."/>
            <person name="Mignone F."/>
            <person name="Miyake S."/>
            <person name="Morris K."/>
            <person name="Mottagui-Tabar S."/>
            <person name="Mulder N."/>
            <person name="Nakano N."/>
            <person name="Nakauchi H."/>
            <person name="Ng P."/>
            <person name="Nilsson R."/>
            <person name="Nishiguchi S."/>
            <person name="Nishikawa S."/>
            <person name="Nori F."/>
            <person name="Ohara O."/>
            <person name="Okazaki Y."/>
            <person name="Orlando V."/>
            <person name="Pang K.C."/>
            <person name="Pavan W.J."/>
            <person name="Pavesi G."/>
            <person name="Pesole G."/>
            <person name="Petrovsky N."/>
            <person name="Piazza S."/>
            <person name="Reed J."/>
            <person name="Reid J.F."/>
            <person name="Ring B.Z."/>
            <person name="Ringwald M."/>
            <person name="Rost B."/>
            <person name="Ruan Y."/>
            <person name="Salzberg S.L."/>
            <person name="Sandelin A."/>
            <person name="Schneider C."/>
            <person name="Schoenbach C."/>
            <person name="Sekiguchi K."/>
            <person name="Semple C.A."/>
            <person name="Seno S."/>
            <person name="Sessa L."/>
            <person name="Sheng Y."/>
            <person name="Shibata Y."/>
            <person name="Shimada H."/>
            <person name="Shimada K."/>
            <person name="Silva D."/>
            <person name="Sinclair B."/>
            <person name="Sperling S."/>
            <person name="Stupka E."/>
            <person name="Sugiura K."/>
            <person name="Sultana R."/>
            <person name="Takenaka Y."/>
            <person name="Taki K."/>
            <person name="Tammoja K."/>
            <person name="Tan S.L."/>
            <person name="Tang S."/>
            <person name="Taylor M.S."/>
            <person name="Tegner J."/>
            <person name="Teichmann S.A."/>
            <person name="Ueda H.R."/>
            <person name="van Nimwegen E."/>
            <person name="Verardo R."/>
            <person name="Wei C.L."/>
            <person name="Yagi K."/>
            <person name="Yamanishi H."/>
            <person name="Zabarovsky E."/>
            <person name="Zhu S."/>
            <person name="Zimmer A."/>
            <person name="Hide W."/>
            <person name="Bult C."/>
            <person name="Grimmond S.M."/>
            <person name="Teasdale R.D."/>
            <person name="Liu E.T."/>
            <person name="Brusic V."/>
            <person name="Quackenbush J."/>
            <person name="Wahlestedt C."/>
            <person name="Mattick J.S."/>
            <person name="Hume D.A."/>
            <person name="Kai C."/>
            <person name="Sasaki D."/>
            <person name="Tomaru Y."/>
            <person name="Fukuda S."/>
            <person name="Kanamori-Katayama M."/>
            <person name="Suzuki M."/>
            <person name="Aoki J."/>
            <person name="Arakawa T."/>
            <person name="Iida J."/>
            <person name="Imamura K."/>
            <person name="Itoh M."/>
            <person name="Kato T."/>
            <person name="Kawaji H."/>
            <person name="Kawagashira N."/>
            <person name="Kawashima T."/>
            <person name="Kojima M."/>
            <person name="Kondo S."/>
            <person name="Konno H."/>
            <person name="Nakano K."/>
            <person name="Ninomiya N."/>
            <person name="Nishio T."/>
            <person name="Okada M."/>
            <person name="Plessy C."/>
            <person name="Shibata K."/>
            <person name="Shiraki T."/>
            <person name="Suzuki S."/>
            <person name="Tagami M."/>
            <person name="Waki K."/>
            <person name="Watahiki A."/>
            <person name="Okamura-Oho Y."/>
            <person name="Suzuki H."/>
            <person name="Kawai J."/>
            <person name="Hayashizaki Y."/>
        </authorList>
    </citation>
    <scope>NUCLEOTIDE SEQUENCE [LARGE SCALE MRNA] (ISOFORMS 1 AND 3)</scope>
    <source>
        <strain>C57BL/6J</strain>
        <tissue>Corpora quadrigemina</tissue>
        <tissue>Fetal testis</tissue>
    </source>
</reference>
<reference key="2">
    <citation type="journal article" date="2004" name="Genome Res.">
        <title>The status, quality, and expansion of the NIH full-length cDNA project: the Mammalian Gene Collection (MGC).</title>
        <authorList>
            <consortium name="The MGC Project Team"/>
        </authorList>
    </citation>
    <scope>NUCLEOTIDE SEQUENCE [LARGE SCALE MRNA] (ISOFORM 2)</scope>
    <source>
        <strain>C57BL/6J</strain>
        <tissue>Brain</tissue>
        <tissue>Eye</tissue>
    </source>
</reference>
<reference key="3">
    <citation type="journal article" date="2003" name="DNA Res.">
        <title>Prediction of the coding sequences of mouse homologues of KIAA gene: III. The complete nucleotide sequences of 500 mouse KIAA-homologous cDNAs identified by screening of terminal sequences of cDNA clones randomly sampled from size-fractionated libraries.</title>
        <authorList>
            <person name="Okazaki N."/>
            <person name="Kikuno R."/>
            <person name="Ohara R."/>
            <person name="Inamoto S."/>
            <person name="Koseki H."/>
            <person name="Hiraoka S."/>
            <person name="Saga Y."/>
            <person name="Nagase T."/>
            <person name="Ohara O."/>
            <person name="Koga H."/>
        </authorList>
    </citation>
    <scope>NUCLEOTIDE SEQUENCE [LARGE SCALE MRNA] OF 123-883</scope>
    <source>
        <tissue>Embryonic tail</tissue>
    </source>
</reference>
<reference key="4">
    <citation type="journal article" date="2005" name="EMBO J.">
        <title>Impaired maturation of myeloid progenitors in mice lacking novel Polycomb group protein MBT-1.</title>
        <authorList>
            <person name="Arai S."/>
            <person name="Miyazaki T."/>
        </authorList>
    </citation>
    <scope>DISRUPTION PHENOTYPE</scope>
    <scope>FUNCTION</scope>
    <scope>SUBUNIT</scope>
    <scope>SUBCELLULAR LOCATION</scope>
    <scope>TISSUE SPECIFICITY</scope>
</reference>
<reference key="5">
    <citation type="journal article" date="2010" name="Cell">
        <title>A tissue-specific atlas of mouse protein phosphorylation and expression.</title>
        <authorList>
            <person name="Huttlin E.L."/>
            <person name="Jedrychowski M.P."/>
            <person name="Elias J.E."/>
            <person name="Goswami T."/>
            <person name="Rad R."/>
            <person name="Beausoleil S.A."/>
            <person name="Villen J."/>
            <person name="Haas W."/>
            <person name="Sowa M.E."/>
            <person name="Gygi S.P."/>
        </authorList>
    </citation>
    <scope>IDENTIFICATION BY MASS SPECTROMETRY [LARGE SCALE ANALYSIS]</scope>
    <source>
        <tissue>Lung</tissue>
    </source>
</reference>
<reference key="6">
    <citation type="journal article" date="2017" name="EMBO J.">
        <title>RBPJ/CBF1 interacts with L3MBTL3/MBT1 to promote repression of Notch signaling via histone demethylase KDM1A/LSD1.</title>
        <authorList>
            <person name="Xu T."/>
            <person name="Park S.S."/>
            <person name="Giaimo B.D."/>
            <person name="Hall D."/>
            <person name="Ferrante F."/>
            <person name="Ho D.M."/>
            <person name="Hori K."/>
            <person name="Anhezini L."/>
            <person name="Ertl I."/>
            <person name="Bartkuhn M."/>
            <person name="Zhang H."/>
            <person name="Milon E."/>
            <person name="Ha K."/>
            <person name="Conlon K.P."/>
            <person name="Kuick R."/>
            <person name="Govindarajoo B."/>
            <person name="Zhang Y."/>
            <person name="Sun Y."/>
            <person name="Dou Y."/>
            <person name="Basrur V."/>
            <person name="Elenitoba-Johnson K.S."/>
            <person name="Nesvizhskii A.I."/>
            <person name="Ceron J."/>
            <person name="Lee C.Y."/>
            <person name="Borggrefe T."/>
            <person name="Kovall R.A."/>
            <person name="Rual J.F."/>
        </authorList>
    </citation>
    <scope>INTERACTION WITH RBPJ</scope>
</reference>
<reference key="7">
    <citation type="journal article" date="2019" name="J. Biol. Chem.">
        <title>Proteolysis of methylated SOX2 protein is regulated by L3MBTL3 and CRL4-DCAF5 ubiquitin ligase.</title>
        <authorList>
            <person name="Zhang C."/>
            <person name="Leng F."/>
            <person name="Saxena L."/>
            <person name="Hoang N."/>
            <person name="Yu J."/>
            <person name="Alejo S."/>
            <person name="Lee L."/>
            <person name="Qi D."/>
            <person name="Lu F."/>
            <person name="Sun H."/>
            <person name="Zhang H."/>
        </authorList>
    </citation>
    <scope>FUNCTION</scope>
    <scope>INTERACTION WITH DCAF5; SOX2 AND SFMBT1</scope>
</reference>
<reference key="8">
    <citation type="journal article" date="2021" name="Sci. Adv.">
        <title>The SAM domain-containing protein 1 (SAMD1) acts as a repressive chromatin regulator at unmethylated CpG islands.</title>
        <authorList>
            <person name="Stielow B."/>
            <person name="Zhou Y."/>
            <person name="Cao Y."/>
            <person name="Simon C."/>
            <person name="Pogoda H.M."/>
            <person name="Jiang J."/>
            <person name="Ren Y."/>
            <person name="Phanor S.K."/>
            <person name="Rohner I."/>
            <person name="Nist A."/>
            <person name="Stiewe T."/>
            <person name="Hammerschmidt M."/>
            <person name="Shi Y."/>
            <person name="Bulyk M.L."/>
            <person name="Wang Z."/>
            <person name="Liefke R."/>
        </authorList>
    </citation>
    <scope>INTERACTION WITH SAMD1</scope>
    <scope>SUBCELLULAR LOCATION</scope>
</reference>
<evidence type="ECO:0000250" key="1">
    <source>
        <dbReference type="UniProtKB" id="Q96JM7"/>
    </source>
</evidence>
<evidence type="ECO:0000255" key="2">
    <source>
        <dbReference type="PROSITE-ProRule" id="PRU00184"/>
    </source>
</evidence>
<evidence type="ECO:0000255" key="3">
    <source>
        <dbReference type="PROSITE-ProRule" id="PRU01143"/>
    </source>
</evidence>
<evidence type="ECO:0000256" key="4">
    <source>
        <dbReference type="SAM" id="MobiDB-lite"/>
    </source>
</evidence>
<evidence type="ECO:0000269" key="5">
    <source>
    </source>
</evidence>
<evidence type="ECO:0000269" key="6">
    <source>
    </source>
</evidence>
<evidence type="ECO:0000269" key="7">
    <source>
    </source>
</evidence>
<evidence type="ECO:0000269" key="8">
    <source>
    </source>
</evidence>
<evidence type="ECO:0000303" key="9">
    <source>
    </source>
</evidence>
<evidence type="ECO:0000303" key="10">
    <source>
    </source>
</evidence>
<evidence type="ECO:0000305" key="11"/>
<evidence type="ECO:0000312" key="12">
    <source>
        <dbReference type="MGI" id="MGI:2143628"/>
    </source>
</evidence>
<proteinExistence type="evidence at protein level"/>
<accession>Q8BLB7</accession>
<accession>Q0VGT0</accession>
<accession>Q641L7</accession>
<accession>Q6ZPI2</accession>
<accession>Q8C0G4</accession>
<name>LMBL3_MOUSE</name>
<comment type="function">
    <text evidence="1 5 7">Is a negative regulator of Notch target genes expression, required for RBPJ-mediated transcriptional repression. It recruits KDM1A to Notch-responsive elements and promotes KDM1A-mediated H3K4me demethylation (By similarity). Involved in the regulation of ubiquitin-dependent degradation of a set of methylated non-histone proteins, including SOX2. It acts as an adapter recruiting the CRL4-DCAF5 E3 ubiquitin ligase complex to methylated target proteins (PubMed:30442713). Also involved in the regulation of ubiquitin-dependent degradation of methylated DNMT1 and E2F1 (By similarity). Required for normal maturation of myeloid progenitor cells.</text>
</comment>
<comment type="subunit">
    <text evidence="1 5 6 7 8">Interacts with RNF2. Interacts (via SAM domain) with SAMD1 (via SAM domain); the interaction mediates L3MBTL3 binding to chromatin (PubMed:33980486). Interacts with RBPJ; the interaction is required for L3MBTL3 localization to chromatin and is impaired the Notch-derived peptides containing the intracellular domain (NICD) (PubMed:29030483). Interacts (via SAM domain) with KDM1A (By similarity). Interacts with DCAF5 (PubMed:30442713). Interacts with DNMT1 (By similarity). Interacts with E2F1 (By similarity). Interacts with SOX2 (PubMed:30442713). Interacts with SFMBT1 (PubMed:30442713).</text>
</comment>
<comment type="subcellular location">
    <subcellularLocation>
        <location evidence="5 8">Nucleus</location>
    </subcellularLocation>
</comment>
<comment type="alternative products">
    <event type="alternative splicing"/>
    <isoform>
        <id>Q8BLB7-1</id>
        <name>1</name>
        <sequence type="displayed"/>
    </isoform>
    <isoform>
        <id>Q8BLB7-2</id>
        <name>2</name>
        <sequence type="described" ref="VSP_013509"/>
    </isoform>
    <isoform>
        <id>Q8BLB7-3</id>
        <name>3</name>
        <sequence type="described" ref="VSP_013510 VSP_013511"/>
    </isoform>
</comment>
<comment type="tissue specificity">
    <text evidence="5">Detected in hematopoietic progenitor cells in fetal liver. Detected in adult bone marrow, heart, brain, spleen, lung, liver, kidney and testis.</text>
</comment>
<comment type="disruption phenotype">
    <text evidence="5">Death at a late embryonic stage due defective erythropoiesis, defects in the maturation of other types of myeloid lineage cells and anemia.</text>
</comment>
<protein>
    <recommendedName>
        <fullName evidence="11">Lethal(3)malignant brain tumor-like protein 3</fullName>
        <shortName>L(3)mbt-like protein 3</shortName>
    </recommendedName>
    <alternativeName>
        <fullName>MBT-1</fullName>
    </alternativeName>
</protein>
<gene>
    <name evidence="12" type="primary">L3mbtl3</name>
    <name type="synonym">Mbt1</name>
</gene>
<organism>
    <name type="scientific">Mus musculus</name>
    <name type="common">Mouse</name>
    <dbReference type="NCBI Taxonomy" id="10090"/>
    <lineage>
        <taxon>Eukaryota</taxon>
        <taxon>Metazoa</taxon>
        <taxon>Chordata</taxon>
        <taxon>Craniata</taxon>
        <taxon>Vertebrata</taxon>
        <taxon>Euteleostomi</taxon>
        <taxon>Mammalia</taxon>
        <taxon>Eutheria</taxon>
        <taxon>Euarchontoglires</taxon>
        <taxon>Glires</taxon>
        <taxon>Rodentia</taxon>
        <taxon>Myomorpha</taxon>
        <taxon>Muroidea</taxon>
        <taxon>Muridae</taxon>
        <taxon>Murinae</taxon>
        <taxon>Mus</taxon>
        <taxon>Mus</taxon>
    </lineage>
</organism>
<sequence>MTESASSTSGQEFDVFSVMDWKDGVGTLPGSDLKFRVNEFGALEVITDESEMESVKKATATTTWMVPTAQDAPTSPPSSRPVFPPAYWTSPPGCPTVFSEKTGVPFRLKEQSKADGLQFCENCCQYGNGDECLSGGKYCSQNCARHAKDKDQKDERDGGEDNDEEDPKCSRKKKPKLSLKADSKDDGEERDDEMENKQDGRILRGSQRARRKRRGDSAVLKQGLPPKGKKTWCWASYLEEEKAVAVPTKLFKEHQSFPYNKNGFKVGMKLEGVDPDHQAMYCVLTVAEVCGYRIKLHFDGYSDCYDFWVNADALDIHPVGWCEKTGHKLRPPKGYKEEEFNWQSYLKTCKAQAAPKSLFENQNITVIPSGFRVGMKLEAADKKSPSVICVATVTDMVDNRFLVHFDNWDESYDYWCESNSPHIHPVGWCKEHRRTLITPPGYSHVKHFSWDKYLEETNSLPAPARAFKVKPPHGFQKKMKLEAVDKRNPLFIRVATVADTDDHRIKVHFDGWSSCYDYWIDADSPDIHPVGWCSKTGHPLQAPLSPAELMEPSETGGCPTLGCRGVGHFKKSRYLGTQSGANCPYSEINLSKERIFPDRLSGDTSPPTTPSFPRSKRMDTRESSSSPETREKHANNFKEDSEKKKENEVKTSAEAKVVREEPTPSVQQSQPPQQVQQVQHAQPPQQAQKAPQAQQAQQAQQAQQAPQAPQTPQPQQAPQVQQAQQAPQAQQAQQPQQAQQPQQAPPVQQPQQVQQAQPTQQQAQTQQQAQRRSAVFLSFKPPIPCLPLRWEQQSKLLPTVAGIPASRVSKWSTDEVSEFIQSLPGCEEHGKVFKDEQIDGEAFLLMTQTDIVKIMSIKLGPALKIFNSILMFKAAEKNSHNEL</sequence>
<keyword id="KW-0025">Alternative splicing</keyword>
<keyword id="KW-0156">Chromatin regulator</keyword>
<keyword id="KW-1017">Isopeptide bond</keyword>
<keyword id="KW-0479">Metal-binding</keyword>
<keyword id="KW-0539">Nucleus</keyword>
<keyword id="KW-1185">Reference proteome</keyword>
<keyword id="KW-0677">Repeat</keyword>
<keyword id="KW-0804">Transcription</keyword>
<keyword id="KW-0805">Transcription regulation</keyword>
<keyword id="KW-0832">Ubl conjugation</keyword>
<keyword id="KW-0862">Zinc</keyword>
<keyword id="KW-0863">Zinc-finger</keyword>